<evidence type="ECO:0000250" key="1"/>
<evidence type="ECO:0000269" key="2">
    <source>
    </source>
</evidence>
<evidence type="ECO:0000305" key="3"/>
<evidence type="ECO:0007829" key="4">
    <source>
        <dbReference type="PDB" id="1QNW"/>
    </source>
</evidence>
<comment type="function">
    <text>Di-N-acetylchitobiose specific lectin.</text>
</comment>
<comment type="similarity">
    <text evidence="3">Belongs to the leguminous lectin family.</text>
</comment>
<keyword id="KW-0002">3D-structure</keyword>
<keyword id="KW-0106">Calcium</keyword>
<keyword id="KW-0903">Direct protein sequencing</keyword>
<keyword id="KW-0325">Glycoprotein</keyword>
<keyword id="KW-0430">Lectin</keyword>
<keyword id="KW-0464">Manganese</keyword>
<keyword id="KW-0479">Metal-binding</keyword>
<protein>
    <recommendedName>
        <fullName>Anti-H(O) lectin 2</fullName>
    </recommendedName>
    <alternativeName>
        <fullName>Anti-H(O) lectin II</fullName>
    </alternativeName>
    <alternativeName>
        <fullName>UEA-II</fullName>
    </alternativeName>
</protein>
<sequence length="249" mass="26928">NLSDDLSFNFDKFVPNQKNIIFQGDASVSTKGVLEVTKVSKPTTRSIGRALYAAPIQIWDSITGKVASFATSFSFVVKDEPDEKIDGVDGLAFFLAPANSQIPSGSSAGMFGLFCSSNDSKSSNQIIAVEFDSYFGKTYNPWDPDFKHIGIDVNSIKSIKTVKDDWRNGEVADVVITYRAPTKSLTVSLSYPSDGTSNIVTASSVDLKAILPEWVSVGFSGGVGNAAKFDHDVLSWYFTSNLEANQSQT</sequence>
<dbReference type="PIR" id="JX0163">
    <property type="entry name" value="JX0163"/>
</dbReference>
<dbReference type="PDB" id="1QNW">
    <property type="method" value="X-ray"/>
    <property type="resolution" value="2.35 A"/>
    <property type="chains" value="A/B/C/D=1-245"/>
</dbReference>
<dbReference type="PDBsum" id="1QNW"/>
<dbReference type="SMR" id="P22973"/>
<dbReference type="UniLectin" id="P22973"/>
<dbReference type="iPTMnet" id="P22973"/>
<dbReference type="EvolutionaryTrace" id="P22973"/>
<dbReference type="GO" id="GO:0030246">
    <property type="term" value="F:carbohydrate binding"/>
    <property type="evidence" value="ECO:0007669"/>
    <property type="project" value="UniProtKB-KW"/>
</dbReference>
<dbReference type="GO" id="GO:0046872">
    <property type="term" value="F:metal ion binding"/>
    <property type="evidence" value="ECO:0007669"/>
    <property type="project" value="UniProtKB-KW"/>
</dbReference>
<dbReference type="CDD" id="cd06899">
    <property type="entry name" value="lectin_legume_LecRK_Arcelin_ConA"/>
    <property type="match status" value="1"/>
</dbReference>
<dbReference type="Gene3D" id="2.60.120.200">
    <property type="match status" value="1"/>
</dbReference>
<dbReference type="InterPro" id="IPR013320">
    <property type="entry name" value="ConA-like_dom_sf"/>
</dbReference>
<dbReference type="InterPro" id="IPR016363">
    <property type="entry name" value="L-lectin"/>
</dbReference>
<dbReference type="InterPro" id="IPR000985">
    <property type="entry name" value="Lectin_LegA_CS"/>
</dbReference>
<dbReference type="InterPro" id="IPR019825">
    <property type="entry name" value="Lectin_legB_Mn/Ca_BS"/>
</dbReference>
<dbReference type="InterPro" id="IPR001220">
    <property type="entry name" value="Legume_lectin_dom"/>
</dbReference>
<dbReference type="InterPro" id="IPR050258">
    <property type="entry name" value="Leguminous_Lectin"/>
</dbReference>
<dbReference type="PANTHER" id="PTHR32401">
    <property type="entry name" value="CONCANAVALIN A-LIKE LECTIN FAMILY PROTEIN"/>
    <property type="match status" value="1"/>
</dbReference>
<dbReference type="PANTHER" id="PTHR32401:SF45">
    <property type="entry name" value="LECTIN"/>
    <property type="match status" value="1"/>
</dbReference>
<dbReference type="Pfam" id="PF00139">
    <property type="entry name" value="Lectin_legB"/>
    <property type="match status" value="1"/>
</dbReference>
<dbReference type="PIRSF" id="PIRSF002690">
    <property type="entry name" value="L-type_lectin_plant"/>
    <property type="match status" value="1"/>
</dbReference>
<dbReference type="SUPFAM" id="SSF49899">
    <property type="entry name" value="Concanavalin A-like lectins/glucanases"/>
    <property type="match status" value="1"/>
</dbReference>
<dbReference type="PROSITE" id="PS00308">
    <property type="entry name" value="LECTIN_LEGUME_ALPHA"/>
    <property type="match status" value="1"/>
</dbReference>
<dbReference type="PROSITE" id="PS00307">
    <property type="entry name" value="LECTIN_LEGUME_BETA"/>
    <property type="match status" value="1"/>
</dbReference>
<accession>P22973</accession>
<feature type="chain" id="PRO_0000105112" description="Anti-H(O) lectin 2">
    <location>
        <begin position="1"/>
        <end position="249"/>
    </location>
</feature>
<feature type="binding site" evidence="1">
    <location>
        <position position="130"/>
    </location>
    <ligand>
        <name>Mn(2+)</name>
        <dbReference type="ChEBI" id="CHEBI:29035"/>
    </ligand>
</feature>
<feature type="binding site" evidence="1">
    <location>
        <position position="132"/>
    </location>
    <ligand>
        <name>Ca(2+)</name>
        <dbReference type="ChEBI" id="CHEBI:29108"/>
    </ligand>
</feature>
<feature type="binding site" evidence="1">
    <location>
        <position position="132"/>
    </location>
    <ligand>
        <name>Mn(2+)</name>
        <dbReference type="ChEBI" id="CHEBI:29035"/>
    </ligand>
</feature>
<feature type="binding site" evidence="1">
    <location>
        <position position="134"/>
    </location>
    <ligand>
        <name>Ca(2+)</name>
        <dbReference type="ChEBI" id="CHEBI:29108"/>
    </ligand>
</feature>
<feature type="binding site" evidence="1">
    <location>
        <position position="140"/>
    </location>
    <ligand>
        <name>Ca(2+)</name>
        <dbReference type="ChEBI" id="CHEBI:29108"/>
    </ligand>
</feature>
<feature type="binding site" evidence="1">
    <location>
        <position position="145"/>
    </location>
    <ligand>
        <name>Ca(2+)</name>
        <dbReference type="ChEBI" id="CHEBI:29108"/>
    </ligand>
</feature>
<feature type="binding site" evidence="1">
    <location>
        <position position="145"/>
    </location>
    <ligand>
        <name>Mn(2+)</name>
        <dbReference type="ChEBI" id="CHEBI:29035"/>
    </ligand>
</feature>
<feature type="binding site" evidence="1">
    <location>
        <position position="148"/>
    </location>
    <ligand>
        <name>Mn(2+)</name>
        <dbReference type="ChEBI" id="CHEBI:29035"/>
    </ligand>
</feature>
<feature type="glycosylation site" description="N-linked (GlcNAc...) asparagine" evidence="2">
    <location>
        <position position="118"/>
    </location>
</feature>
<feature type="glycosylation site" description="N-linked (GlcNAc...) asparagine" evidence="2">
    <location>
        <position position="245"/>
    </location>
</feature>
<feature type="strand" evidence="4">
    <location>
        <begin position="5"/>
        <end position="12"/>
    </location>
</feature>
<feature type="strand" evidence="4">
    <location>
        <begin position="20"/>
        <end position="24"/>
    </location>
</feature>
<feature type="strand" evidence="4">
    <location>
        <begin position="34"/>
        <end position="37"/>
    </location>
</feature>
<feature type="strand" evidence="4">
    <location>
        <begin position="46"/>
        <end position="54"/>
    </location>
</feature>
<feature type="turn" evidence="4">
    <location>
        <begin position="61"/>
        <end position="63"/>
    </location>
</feature>
<feature type="strand" evidence="4">
    <location>
        <begin position="68"/>
        <end position="76"/>
    </location>
</feature>
<feature type="strand" evidence="4">
    <location>
        <begin position="90"/>
        <end position="97"/>
    </location>
</feature>
<feature type="helix" evidence="4">
    <location>
        <begin position="108"/>
        <end position="110"/>
    </location>
</feature>
<feature type="turn" evidence="4">
    <location>
        <begin position="111"/>
        <end position="113"/>
    </location>
</feature>
<feature type="strand" evidence="4">
    <location>
        <begin position="115"/>
        <end position="117"/>
    </location>
</feature>
<feature type="strand" evidence="4">
    <location>
        <begin position="127"/>
        <end position="132"/>
    </location>
</feature>
<feature type="turn" evidence="4">
    <location>
        <begin position="137"/>
        <end position="139"/>
    </location>
</feature>
<feature type="strand" evidence="4">
    <location>
        <begin position="148"/>
        <end position="157"/>
    </location>
</feature>
<feature type="strand" evidence="4">
    <location>
        <begin position="159"/>
        <end position="163"/>
    </location>
</feature>
<feature type="strand" evidence="4">
    <location>
        <begin position="172"/>
        <end position="179"/>
    </location>
</feature>
<feature type="turn" evidence="4">
    <location>
        <begin position="180"/>
        <end position="183"/>
    </location>
</feature>
<feature type="strand" evidence="4">
    <location>
        <begin position="184"/>
        <end position="190"/>
    </location>
</feature>
<feature type="turn" evidence="4">
    <location>
        <begin position="192"/>
        <end position="194"/>
    </location>
</feature>
<feature type="strand" evidence="4">
    <location>
        <begin position="197"/>
        <end position="203"/>
    </location>
</feature>
<feature type="helix" evidence="4">
    <location>
        <begin position="207"/>
        <end position="210"/>
    </location>
</feature>
<feature type="strand" evidence="4">
    <location>
        <begin position="213"/>
        <end position="224"/>
    </location>
</feature>
<feature type="helix" evidence="4">
    <location>
        <begin position="226"/>
        <end position="228"/>
    </location>
</feature>
<feature type="strand" evidence="4">
    <location>
        <begin position="232"/>
        <end position="241"/>
    </location>
</feature>
<organism>
    <name type="scientific">Ulex europaeus</name>
    <name type="common">Furze</name>
    <dbReference type="NCBI Taxonomy" id="3902"/>
    <lineage>
        <taxon>Eukaryota</taxon>
        <taxon>Viridiplantae</taxon>
        <taxon>Streptophyta</taxon>
        <taxon>Embryophyta</taxon>
        <taxon>Tracheophyta</taxon>
        <taxon>Spermatophyta</taxon>
        <taxon>Magnoliopsida</taxon>
        <taxon>eudicotyledons</taxon>
        <taxon>Gunneridae</taxon>
        <taxon>Pentapetalae</taxon>
        <taxon>rosids</taxon>
        <taxon>fabids</taxon>
        <taxon>Fabales</taxon>
        <taxon>Fabaceae</taxon>
        <taxon>Papilionoideae</taxon>
        <taxon>50 kb inversion clade</taxon>
        <taxon>genistoids sensu lato</taxon>
        <taxon>core genistoids</taxon>
        <taxon>Genisteae</taxon>
        <taxon>Ulex</taxon>
    </lineage>
</organism>
<name>LEC2_ULEEU</name>
<proteinExistence type="evidence at protein level"/>
<reference key="1">
    <citation type="journal article" date="1991" name="J. Biochem.">
        <title>The primary structures of two types of the Ulex europeus seed lectin.</title>
        <authorList>
            <person name="Konami Y."/>
            <person name="Yamamoto K."/>
            <person name="Osawa T."/>
        </authorList>
    </citation>
    <scope>PROTEIN SEQUENCE</scope>
    <scope>GLYCOSYLATION AT ASN-245</scope>
    <source>
        <tissue>Seed</tissue>
    </source>
</reference>
<reference key="2">
    <citation type="journal article" date="1991" name="Biol. Chem. Hoppe-Seyler">
        <title>Purification and characterization of a new type lactose-binding Ulex europaeus lectin by affinity chromatography.</title>
        <authorList>
            <person name="Konami Y."/>
            <person name="Yamamoto K."/>
            <person name="Osawa T."/>
        </authorList>
    </citation>
    <scope>PROTEIN SEQUENCE OF 1-36</scope>
</reference>